<proteinExistence type="inferred from homology"/>
<reference key="1">
    <citation type="journal article" date="2005" name="J. Bacteriol.">
        <title>Completion of the genome sequence of Brucella abortus and comparison to the highly similar genomes of Brucella melitensis and Brucella suis.</title>
        <authorList>
            <person name="Halling S.M."/>
            <person name="Peterson-Burch B.D."/>
            <person name="Bricker B.J."/>
            <person name="Zuerner R.L."/>
            <person name="Qing Z."/>
            <person name="Li L.-L."/>
            <person name="Kapur V."/>
            <person name="Alt D.P."/>
            <person name="Olsen S.C."/>
        </authorList>
    </citation>
    <scope>NUCLEOTIDE SEQUENCE [LARGE SCALE GENOMIC DNA]</scope>
    <source>
        <strain>9-941</strain>
    </source>
</reference>
<keyword id="KW-0975">Bacterial flagellum</keyword>
<keyword id="KW-0998">Cell outer membrane</keyword>
<keyword id="KW-0449">Lipoprotein</keyword>
<keyword id="KW-0472">Membrane</keyword>
<keyword id="KW-0564">Palmitate</keyword>
<keyword id="KW-0732">Signal</keyword>
<feature type="signal peptide" evidence="1">
    <location>
        <begin position="1"/>
        <end position="16"/>
    </location>
</feature>
<feature type="chain" id="PRO_0000009428" description="Flagellar L-ring protein">
    <location>
        <begin position="17"/>
        <end position="238"/>
    </location>
</feature>
<feature type="lipid moiety-binding region" description="N-palmitoyl cysteine" evidence="1">
    <location>
        <position position="17"/>
    </location>
</feature>
<feature type="lipid moiety-binding region" description="S-diacylglycerol cysteine" evidence="1">
    <location>
        <position position="17"/>
    </location>
</feature>
<accession>Q579T6</accession>
<dbReference type="EMBL" id="AE017224">
    <property type="protein sequence ID" value="AAX75598.1"/>
    <property type="molecule type" value="Genomic_DNA"/>
</dbReference>
<dbReference type="SMR" id="Q579T6"/>
<dbReference type="EnsemblBacteria" id="AAX75598">
    <property type="protein sequence ID" value="AAX75598"/>
    <property type="gene ID" value="BruAb2_0154"/>
</dbReference>
<dbReference type="KEGG" id="bmb:BruAb2_0154"/>
<dbReference type="HOGENOM" id="CLU_069313_1_2_5"/>
<dbReference type="Proteomes" id="UP000000540">
    <property type="component" value="Chromosome II"/>
</dbReference>
<dbReference type="GO" id="GO:0009427">
    <property type="term" value="C:bacterial-type flagellum basal body, distal rod, L ring"/>
    <property type="evidence" value="ECO:0007669"/>
    <property type="project" value="InterPro"/>
</dbReference>
<dbReference type="GO" id="GO:0009279">
    <property type="term" value="C:cell outer membrane"/>
    <property type="evidence" value="ECO:0007669"/>
    <property type="project" value="UniProtKB-SubCell"/>
</dbReference>
<dbReference type="GO" id="GO:0003774">
    <property type="term" value="F:cytoskeletal motor activity"/>
    <property type="evidence" value="ECO:0007669"/>
    <property type="project" value="InterPro"/>
</dbReference>
<dbReference type="GO" id="GO:0071973">
    <property type="term" value="P:bacterial-type flagellum-dependent cell motility"/>
    <property type="evidence" value="ECO:0007669"/>
    <property type="project" value="InterPro"/>
</dbReference>
<dbReference type="HAMAP" id="MF_00415">
    <property type="entry name" value="FlgH"/>
    <property type="match status" value="1"/>
</dbReference>
<dbReference type="InterPro" id="IPR000527">
    <property type="entry name" value="Flag_Lring"/>
</dbReference>
<dbReference type="NCBIfam" id="NF001305">
    <property type="entry name" value="PRK00249.1-5"/>
    <property type="match status" value="1"/>
</dbReference>
<dbReference type="PANTHER" id="PTHR34933">
    <property type="entry name" value="FLAGELLAR L-RING PROTEIN"/>
    <property type="match status" value="1"/>
</dbReference>
<dbReference type="PANTHER" id="PTHR34933:SF1">
    <property type="entry name" value="FLAGELLAR L-RING PROTEIN"/>
    <property type="match status" value="1"/>
</dbReference>
<dbReference type="Pfam" id="PF02107">
    <property type="entry name" value="FlgH"/>
    <property type="match status" value="1"/>
</dbReference>
<dbReference type="PRINTS" id="PR01008">
    <property type="entry name" value="FLGLRINGFLGH"/>
</dbReference>
<dbReference type="PROSITE" id="PS51257">
    <property type="entry name" value="PROKAR_LIPOPROTEIN"/>
    <property type="match status" value="1"/>
</dbReference>
<comment type="function">
    <text evidence="1">Assembles around the rod to form the L-ring and probably protects the motor/basal body from shearing forces during rotation.</text>
</comment>
<comment type="subunit">
    <text evidence="1">The basal body constitutes a major portion of the flagellar organelle and consists of four rings (L,P,S, and M) mounted on a central rod.</text>
</comment>
<comment type="subcellular location">
    <subcellularLocation>
        <location evidence="1">Cell outer membrane</location>
        <topology evidence="1">Lipid-anchor</topology>
    </subcellularLocation>
    <subcellularLocation>
        <location evidence="1">Bacterial flagellum basal body</location>
    </subcellularLocation>
</comment>
<comment type="similarity">
    <text evidence="1">Belongs to the FlgH family.</text>
</comment>
<comment type="caution">
    <text evidence="2">Brucella species display species-specific inactivation of flagellar genes and are consequently nonmotile.</text>
</comment>
<sequence>MNKAILAVAMVLLLAGCATKPEEIGRAPDLSPVAAHLGMQNNPQFNGYPARPGKASYSLWDQRSTNFFKDPRAATPGDVLTVIISINDRANLDNKTDRERVSKGIYGGGGSFATSSITGAAAGGDMDASVNTHSDSKSKGKGTIERSEDIRLQIAAIVTDTLPNGNLIIRGSQEVRVNNELRVLNVAGVVRPRDISGNNTISYDKIAEARISYGGRGRLSEIQQPPYGQQILDQFSPF</sequence>
<name>FLGH_BRUAB</name>
<gene>
    <name evidence="1" type="primary">flgH</name>
    <name type="ordered locus">BruAb2_0154</name>
</gene>
<organism>
    <name type="scientific">Brucella abortus biovar 1 (strain 9-941)</name>
    <dbReference type="NCBI Taxonomy" id="262698"/>
    <lineage>
        <taxon>Bacteria</taxon>
        <taxon>Pseudomonadati</taxon>
        <taxon>Pseudomonadota</taxon>
        <taxon>Alphaproteobacteria</taxon>
        <taxon>Hyphomicrobiales</taxon>
        <taxon>Brucellaceae</taxon>
        <taxon>Brucella/Ochrobactrum group</taxon>
        <taxon>Brucella</taxon>
    </lineage>
</organism>
<evidence type="ECO:0000255" key="1">
    <source>
        <dbReference type="HAMAP-Rule" id="MF_00415"/>
    </source>
</evidence>
<evidence type="ECO:0000305" key="2"/>
<protein>
    <recommendedName>
        <fullName evidence="1">Flagellar L-ring protein</fullName>
    </recommendedName>
    <alternativeName>
        <fullName evidence="1">Basal body L-ring protein</fullName>
    </alternativeName>
</protein>